<feature type="signal peptide" evidence="7">
    <location>
        <begin position="1"/>
        <end position="23"/>
    </location>
</feature>
<feature type="chain" id="PRO_0000033177" description="Sclerostin">
    <location>
        <begin position="24"/>
        <end position="213"/>
    </location>
</feature>
<feature type="domain" description="CTCK">
    <location>
        <begin position="82"/>
        <end position="172"/>
    </location>
</feature>
<feature type="region of interest" description="Disordered" evidence="3">
    <location>
        <begin position="41"/>
        <end position="71"/>
    </location>
</feature>
<feature type="region of interest" description="Disordered" evidence="3">
    <location>
        <begin position="178"/>
        <end position="213"/>
    </location>
</feature>
<feature type="compositionally biased region" description="Basic residues" evidence="3">
    <location>
        <begin position="190"/>
        <end position="201"/>
    </location>
</feature>
<feature type="glycosylation site" description="N-linked (GlcNAc...) asparagine" evidence="2">
    <location>
        <position position="53"/>
    </location>
</feature>
<feature type="glycosylation site" description="N-linked (GlcNAc...) asparagine" evidence="2">
    <location>
        <position position="175"/>
    </location>
</feature>
<feature type="disulfide bond" evidence="9">
    <location>
        <begin position="80"/>
        <end position="134"/>
    </location>
</feature>
<feature type="disulfide bond" evidence="9">
    <location>
        <begin position="94"/>
        <end position="148"/>
    </location>
</feature>
<feature type="disulfide bond" evidence="9">
    <location>
        <begin position="105"/>
        <end position="165"/>
    </location>
</feature>
<feature type="disulfide bond" evidence="9">
    <location>
        <begin position="109"/>
        <end position="167"/>
    </location>
</feature>
<feature type="splice variant" id="VSP_010189" description="In isoform 2." evidence="14">
    <original>RPPHHPFETK</original>
    <variation>WPGGRPPSRAPLST</variation>
    <location>
        <begin position="64"/>
        <end position="73"/>
    </location>
</feature>
<feature type="sequence variant" id="VAR_065766" description="In CDD; affects protein secretion; dbSNP:rs387907169." evidence="12">
    <original>V</original>
    <variation>L</variation>
    <location>
        <position position="21"/>
    </location>
</feature>
<feature type="sequence variant" id="VAR_065767" description="In CDD; de novo mutation; affects protein secretion; dbSNP:rs387907169." evidence="12">
    <original>V</original>
    <variation>M</variation>
    <location>
        <position position="21"/>
    </location>
</feature>
<feature type="sequence variant" id="VAR_063982" description="In SOST1; leads to retention of the mutant protein in the endoplasmic reticulum; leads to a complete loss of function of the protein; dbSNP:rs2154590425." evidence="11">
    <original>C</original>
    <variation>R</variation>
    <location>
        <position position="167"/>
    </location>
</feature>
<feature type="strand" evidence="17">
    <location>
        <begin position="78"/>
        <end position="80"/>
    </location>
</feature>
<feature type="strand" evidence="17">
    <location>
        <begin position="82"/>
        <end position="87"/>
    </location>
</feature>
<feature type="strand" evidence="17">
    <location>
        <begin position="95"/>
        <end position="98"/>
    </location>
</feature>
<feature type="strand" evidence="17">
    <location>
        <begin position="100"/>
        <end position="105"/>
    </location>
</feature>
<feature type="strand" evidence="17">
    <location>
        <begin position="139"/>
        <end position="147"/>
    </location>
</feature>
<feature type="strand" evidence="17">
    <location>
        <begin position="155"/>
        <end position="162"/>
    </location>
</feature>
<accession>Q9BQB4</accession>
<accession>Q495N9</accession>
<proteinExistence type="evidence at protein level"/>
<comment type="function">
    <text evidence="8">Negative regulator of bone growth that acts through inhibition of Wnt signaling and bone formation.</text>
</comment>
<comment type="subunit">
    <text evidence="8 13">Interacts with LRP4 (via the extracellular domain); the interaction facilitates the inhibition of Wnt signaling. Interacts with LRP5 (via the first two YWTD-EGF repeat domains); the interaction inhibits Wnt-mediated signaling. Interacts with LRP6.</text>
</comment>
<comment type="interaction">
    <interactant intactId="EBI-5746563">
        <id>Q9BQB4</id>
    </interactant>
    <interactant intactId="EBI-310873">
        <id>O75096</id>
        <label>LRP4</label>
    </interactant>
    <organismsDiffer>false</organismsDiffer>
    <experiments>6</experiments>
</comment>
<comment type="interaction">
    <interactant intactId="EBI-5746563">
        <id>Q9BQB4</id>
    </interactant>
    <interactant intactId="EBI-2466421">
        <id>O75197</id>
        <label>LRP5</label>
    </interactant>
    <organismsDiffer>false</organismsDiffer>
    <experiments>5</experiments>
</comment>
<comment type="interaction">
    <interactant intactId="EBI-5746563">
        <id>Q9BQB4</id>
    </interactant>
    <interactant intactId="EBI-910915">
        <id>O75581</id>
        <label>LRP6</label>
    </interactant>
    <organismsDiffer>false</organismsDiffer>
    <experiments>9</experiments>
</comment>
<comment type="interaction">
    <interactant intactId="EBI-5746563">
        <id>Q9BQB4</id>
    </interactant>
    <interactant intactId="EBI-742388">
        <id>Q9H8W4</id>
        <label>PLEKHF2</label>
    </interactant>
    <organismsDiffer>false</organismsDiffer>
    <experiments>3</experiments>
</comment>
<comment type="subcellular location">
    <subcellularLocation>
        <location evidence="10">Secreted</location>
        <location evidence="10">Extracellular space</location>
        <location evidence="10">Extracellular matrix</location>
    </subcellularLocation>
</comment>
<comment type="alternative products">
    <event type="alternative splicing"/>
    <isoform>
        <id>Q9BQB4-1</id>
        <name>1</name>
        <sequence type="displayed"/>
    </isoform>
    <isoform>
        <id>Q9BQB4-2</id>
        <name>2</name>
        <sequence type="described" ref="VSP_010189"/>
    </isoform>
</comment>
<comment type="tissue specificity">
    <text evidence="10">Widely expressed at low levels with highest levels in bone, cartilage, kidney, liver, bone marrow and primary osteoblasts differentiated for 21 days. Detected in the subendothelial layer of the aortic intima (at protein level).</text>
</comment>
<comment type="disease" evidence="4 5 11">
    <disease id="DI-01007">
        <name>Sclerosteosis 1</name>
        <acronym>SOST1</acronym>
        <description>An autosomal recessive sclerosing bone dysplasia characterized by a generalized hyperostosis and sclerosis leading to a markedly thickened skull, with mandible, ribs, clavicles and all long bones also being affected. Due to narrowing of the foramina of the cranial nerves, facial nerve palsy, hearing loss and atrophy of the optic nerves can occur. Sclerosteosis is clinically and radiologically very similar to van Buchem disease, mainly differentiated by hand malformations and a large stature in sclerosteosis patients.</description>
        <dbReference type="MIM" id="269500"/>
    </disease>
    <text>The disease is caused by variants affecting the gene represented in this entry.</text>
</comment>
<comment type="disease" evidence="6">
    <disease id="DI-01121">
        <name>Van Buchem disease</name>
        <acronym>VBCH</acronym>
        <description>VBCH is an autosomal recessive sclerosing bone dysplasia characterized by endosteal hyperostosis of the mandible, skull, ribs, clavicles, and diaphyses of the long bones. Affected patients present a symmetrically increased thickness of bones, most frequently found as an enlarged jawbone, but also an enlargement of the skull, ribs, diaphysis of long bones, as well as tubular bones of hands and feet. The clinical consequence of increased thickness of the skull include facial nerve palsy causing hearing loss, visual problems, neurological pain, and, very rarely, blindness as a consequence of optic atrophy. Serum alkaline phosphatase levels are elevated.</description>
        <dbReference type="MIM" id="239100"/>
    </disease>
    <text>The disease is caused by variants affecting the gene represented in this entry. A 52 kb deletion downstream of SOST results in SOST transcription suppression causing van Buchem disease.</text>
</comment>
<comment type="disease" evidence="12">
    <disease id="DI-03135">
        <name>Craniodiaphyseal dysplasia autosomal dominant</name>
        <acronym>CDD</acronym>
        <description>A severe bone dysplasia characterized by massive generalized hyperostosis and sclerosis, especially involving the skull and facial bones. The sclerosis is so severe that the resulting facial distortion is referred to as 'leontiasis ossea' (leonine faces) and the bone deposition results in progressive stenosis of craniofacial foramina. Respiratory obstruction due to choanal stenosis compromises the clinical outcomes of affected patients.</description>
        <dbReference type="MIM" id="122860"/>
    </disease>
    <text>The disease is caused by variants affecting the gene represented in this entry. Heterozygous mutations located in the secretion signal of the SOST gene prevent sclerostin secretion and can be responsible for craniodiaphyseal dysplasia.</text>
</comment>
<comment type="similarity">
    <text evidence="15">Belongs to the sclerostin family.</text>
</comment>
<evidence type="ECO:0000250" key="1">
    <source>
        <dbReference type="UniProtKB" id="Q99P68"/>
    </source>
</evidence>
<evidence type="ECO:0000255" key="2"/>
<evidence type="ECO:0000256" key="3">
    <source>
        <dbReference type="SAM" id="MobiDB-lite"/>
    </source>
</evidence>
<evidence type="ECO:0000269" key="4">
    <source>
    </source>
</evidence>
<evidence type="ECO:0000269" key="5">
    <source>
    </source>
</evidence>
<evidence type="ECO:0000269" key="6">
    <source>
    </source>
</evidence>
<evidence type="ECO:0000269" key="7">
    <source>
    </source>
</evidence>
<evidence type="ECO:0000269" key="8">
    <source>
    </source>
</evidence>
<evidence type="ECO:0000269" key="9">
    <source>
    </source>
</evidence>
<evidence type="ECO:0000269" key="10">
    <source>
    </source>
</evidence>
<evidence type="ECO:0000269" key="11">
    <source>
    </source>
</evidence>
<evidence type="ECO:0000269" key="12">
    <source>
    </source>
</evidence>
<evidence type="ECO:0000269" key="13">
    <source>
    </source>
</evidence>
<evidence type="ECO:0000303" key="14">
    <source>
    </source>
</evidence>
<evidence type="ECO:0000305" key="15"/>
<evidence type="ECO:0000312" key="16">
    <source>
        <dbReference type="HGNC" id="HGNC:13771"/>
    </source>
</evidence>
<evidence type="ECO:0007829" key="17">
    <source>
        <dbReference type="PDB" id="2K8P"/>
    </source>
</evidence>
<name>SOST_HUMAN</name>
<gene>
    <name evidence="16" type="primary">SOST</name>
    <name type="ORF">UNQ2976/PRO7455/PRO7476</name>
</gene>
<keyword id="KW-0002">3D-structure</keyword>
<keyword id="KW-0025">Alternative splicing</keyword>
<keyword id="KW-0903">Direct protein sequencing</keyword>
<keyword id="KW-0225">Disease variant</keyword>
<keyword id="KW-1015">Disulfide bond</keyword>
<keyword id="KW-0272">Extracellular matrix</keyword>
<keyword id="KW-0325">Glycoprotein</keyword>
<keyword id="KW-0358">Heparin-binding</keyword>
<keyword id="KW-1267">Proteomics identification</keyword>
<keyword id="KW-1185">Reference proteome</keyword>
<keyword id="KW-0964">Secreted</keyword>
<keyword id="KW-0732">Signal</keyword>
<keyword id="KW-0879">Wnt signaling pathway</keyword>
<protein>
    <recommendedName>
        <fullName evidence="1">Sclerostin</fullName>
    </recommendedName>
</protein>
<dbReference type="EMBL" id="AF331844">
    <property type="protein sequence ID" value="AAK16158.1"/>
    <property type="molecule type" value="mRNA"/>
</dbReference>
<dbReference type="EMBL" id="AF326736">
    <property type="protein sequence ID" value="AAK13451.1"/>
    <property type="molecule type" value="Genomic_DNA"/>
</dbReference>
<dbReference type="EMBL" id="AF326739">
    <property type="protein sequence ID" value="AAK13454.1"/>
    <property type="molecule type" value="mRNA"/>
</dbReference>
<dbReference type="EMBL" id="AY358203">
    <property type="protein sequence ID" value="AAQ88570.1"/>
    <property type="molecule type" value="mRNA"/>
</dbReference>
<dbReference type="EMBL" id="AY358627">
    <property type="protein sequence ID" value="AAQ88990.1"/>
    <property type="molecule type" value="mRNA"/>
</dbReference>
<dbReference type="EMBL" id="AC055813">
    <property type="status" value="NOT_ANNOTATED_CDS"/>
    <property type="molecule type" value="Genomic_DNA"/>
</dbReference>
<dbReference type="EMBL" id="BC101086">
    <property type="protein sequence ID" value="AAI01087.1"/>
    <property type="molecule type" value="mRNA"/>
</dbReference>
<dbReference type="EMBL" id="BC101087">
    <property type="protein sequence ID" value="AAI01088.1"/>
    <property type="molecule type" value="mRNA"/>
</dbReference>
<dbReference type="EMBL" id="BC101088">
    <property type="protein sequence ID" value="AAI01089.1"/>
    <property type="molecule type" value="mRNA"/>
</dbReference>
<dbReference type="EMBL" id="BC101089">
    <property type="protein sequence ID" value="AAI01090.1"/>
    <property type="molecule type" value="mRNA"/>
</dbReference>
<dbReference type="CCDS" id="CCDS11468.1">
    <molecule id="Q9BQB4-1"/>
</dbReference>
<dbReference type="RefSeq" id="NP_079513.1">
    <molecule id="Q9BQB4-1"/>
    <property type="nucleotide sequence ID" value="NM_025237.3"/>
</dbReference>
<dbReference type="PDB" id="2K8P">
    <property type="method" value="NMR"/>
    <property type="chains" value="A=25-213"/>
</dbReference>
<dbReference type="PDB" id="3SOV">
    <property type="method" value="X-ray"/>
    <property type="resolution" value="1.27 A"/>
    <property type="chains" value="Z=115-121"/>
</dbReference>
<dbReference type="PDB" id="6L6R">
    <property type="method" value="X-ray"/>
    <property type="resolution" value="3.80 A"/>
    <property type="chains" value="C/D=24-177"/>
</dbReference>
<dbReference type="PDBsum" id="2K8P"/>
<dbReference type="PDBsum" id="3SOV"/>
<dbReference type="PDBsum" id="6L6R"/>
<dbReference type="SMR" id="Q9BQB4"/>
<dbReference type="BioGRID" id="119186">
    <property type="interactions" value="144"/>
</dbReference>
<dbReference type="CORUM" id="Q9BQB4"/>
<dbReference type="DIP" id="DIP-59407N"/>
<dbReference type="ELM" id="Q9BQB4"/>
<dbReference type="FunCoup" id="Q9BQB4">
    <property type="interactions" value="389"/>
</dbReference>
<dbReference type="IntAct" id="Q9BQB4">
    <property type="interactions" value="130"/>
</dbReference>
<dbReference type="STRING" id="9606.ENSP00000301691"/>
<dbReference type="ChEMBL" id="CHEMBL3580487"/>
<dbReference type="DrugBank" id="DB11866">
    <property type="generic name" value="Romosozumab"/>
</dbReference>
<dbReference type="DrugCentral" id="Q9BQB4"/>
<dbReference type="GlyCosmos" id="Q9BQB4">
    <property type="glycosylation" value="2 sites, No reported glycans"/>
</dbReference>
<dbReference type="GlyGen" id="Q9BQB4">
    <property type="glycosylation" value="2 sites"/>
</dbReference>
<dbReference type="BioMuta" id="SOST"/>
<dbReference type="DMDM" id="20140220"/>
<dbReference type="MassIVE" id="Q9BQB4"/>
<dbReference type="PaxDb" id="9606-ENSP00000301691"/>
<dbReference type="PeptideAtlas" id="Q9BQB4"/>
<dbReference type="ProteomicsDB" id="78650">
    <molecule id="Q9BQB4-1"/>
</dbReference>
<dbReference type="ProteomicsDB" id="78651">
    <molecule id="Q9BQB4-2"/>
</dbReference>
<dbReference type="ABCD" id="Q9BQB4">
    <property type="antibodies" value="12 sequenced antibodies"/>
</dbReference>
<dbReference type="Antibodypedia" id="29585">
    <property type="antibodies" value="672 antibodies from 34 providers"/>
</dbReference>
<dbReference type="DNASU" id="50964"/>
<dbReference type="Ensembl" id="ENST00000301691.3">
    <molecule id="Q9BQB4-1"/>
    <property type="protein sequence ID" value="ENSP00000301691.1"/>
    <property type="gene ID" value="ENSG00000167941.3"/>
</dbReference>
<dbReference type="GeneID" id="50964"/>
<dbReference type="KEGG" id="hsa:50964"/>
<dbReference type="MANE-Select" id="ENST00000301691.3">
    <property type="protein sequence ID" value="ENSP00000301691.1"/>
    <property type="RefSeq nucleotide sequence ID" value="NM_025237.3"/>
    <property type="RefSeq protein sequence ID" value="NP_079513.1"/>
</dbReference>
<dbReference type="UCSC" id="uc002iec.1">
    <molecule id="Q9BQB4-1"/>
    <property type="organism name" value="human"/>
</dbReference>
<dbReference type="AGR" id="HGNC:13771"/>
<dbReference type="CTD" id="50964"/>
<dbReference type="DisGeNET" id="50964"/>
<dbReference type="GeneCards" id="SOST"/>
<dbReference type="GeneReviews" id="SOST"/>
<dbReference type="HGNC" id="HGNC:13771">
    <property type="gene designation" value="SOST"/>
</dbReference>
<dbReference type="HPA" id="ENSG00000167941">
    <property type="expression patterns" value="Tissue enriched (kidney)"/>
</dbReference>
<dbReference type="MalaCards" id="SOST"/>
<dbReference type="MIM" id="122860">
    <property type="type" value="phenotype"/>
</dbReference>
<dbReference type="MIM" id="239100">
    <property type="type" value="phenotype"/>
</dbReference>
<dbReference type="MIM" id="269500">
    <property type="type" value="phenotype"/>
</dbReference>
<dbReference type="MIM" id="605740">
    <property type="type" value="gene"/>
</dbReference>
<dbReference type="neXtProt" id="NX_Q9BQB4"/>
<dbReference type="OpenTargets" id="ENSG00000167941"/>
<dbReference type="Orphanet" id="1513">
    <property type="disease" value="Craniodiaphyseal dysplasia"/>
</dbReference>
<dbReference type="Orphanet" id="3416">
    <property type="disease" value="Hyperostosis corticalis generalisata"/>
</dbReference>
<dbReference type="Orphanet" id="3152">
    <property type="disease" value="Sclerosteosis"/>
</dbReference>
<dbReference type="PharmGKB" id="PA37809"/>
<dbReference type="VEuPathDB" id="HostDB:ENSG00000167941"/>
<dbReference type="eggNOG" id="ENOG502QTBG">
    <property type="taxonomic scope" value="Eukaryota"/>
</dbReference>
<dbReference type="GeneTree" id="ENSGT00390000014900"/>
<dbReference type="HOGENOM" id="CLU_087969_1_0_1"/>
<dbReference type="InParanoid" id="Q9BQB4"/>
<dbReference type="OMA" id="MFKNDAT"/>
<dbReference type="OrthoDB" id="6624188at2759"/>
<dbReference type="PAN-GO" id="Q9BQB4">
    <property type="GO annotations" value="5 GO annotations based on evolutionary models"/>
</dbReference>
<dbReference type="PhylomeDB" id="Q9BQB4"/>
<dbReference type="TreeFam" id="TF353019"/>
<dbReference type="PathwayCommons" id="Q9BQB4"/>
<dbReference type="Reactome" id="R-HSA-201681">
    <property type="pathway name" value="TCF dependent signaling in response to WNT"/>
</dbReference>
<dbReference type="Reactome" id="R-HSA-3772470">
    <property type="pathway name" value="Negative regulation of TCF-dependent signaling by WNT ligand antagonists"/>
</dbReference>
<dbReference type="SignaLink" id="Q9BQB4"/>
<dbReference type="SIGNOR" id="Q9BQB4"/>
<dbReference type="BioGRID-ORCS" id="50964">
    <property type="hits" value="10 hits in 1139 CRISPR screens"/>
</dbReference>
<dbReference type="EvolutionaryTrace" id="Q9BQB4"/>
<dbReference type="GeneWiki" id="Sclerostin"/>
<dbReference type="GeneWiki" id="SOST"/>
<dbReference type="GenomeRNAi" id="50964"/>
<dbReference type="Pharos" id="Q9BQB4">
    <property type="development level" value="Tclin"/>
</dbReference>
<dbReference type="PRO" id="PR:Q9BQB4"/>
<dbReference type="Proteomes" id="UP000005640">
    <property type="component" value="Chromosome 17"/>
</dbReference>
<dbReference type="RNAct" id="Q9BQB4">
    <property type="molecule type" value="protein"/>
</dbReference>
<dbReference type="Bgee" id="ENSG00000167941">
    <property type="expression patterns" value="Expressed in trabecular bone tissue and 63 other cell types or tissues"/>
</dbReference>
<dbReference type="GO" id="GO:0005576">
    <property type="term" value="C:extracellular region"/>
    <property type="evidence" value="ECO:0000304"/>
    <property type="project" value="Reactome"/>
</dbReference>
<dbReference type="GO" id="GO:0005615">
    <property type="term" value="C:extracellular space"/>
    <property type="evidence" value="ECO:0000318"/>
    <property type="project" value="GO_Central"/>
</dbReference>
<dbReference type="GO" id="GO:0005794">
    <property type="term" value="C:Golgi apparatus"/>
    <property type="evidence" value="ECO:0007669"/>
    <property type="project" value="Ensembl"/>
</dbReference>
<dbReference type="GO" id="GO:0032991">
    <property type="term" value="C:protein-containing complex"/>
    <property type="evidence" value="ECO:0007669"/>
    <property type="project" value="Ensembl"/>
</dbReference>
<dbReference type="GO" id="GO:0036122">
    <property type="term" value="F:BMP binding"/>
    <property type="evidence" value="ECO:0000318"/>
    <property type="project" value="GO_Central"/>
</dbReference>
<dbReference type="GO" id="GO:0030246">
    <property type="term" value="F:carbohydrate binding"/>
    <property type="evidence" value="ECO:0000269"/>
    <property type="project" value="DisProt"/>
</dbReference>
<dbReference type="GO" id="GO:0140297">
    <property type="term" value="F:DNA-binding transcription factor binding"/>
    <property type="evidence" value="ECO:0000314"/>
    <property type="project" value="UniProtKB"/>
</dbReference>
<dbReference type="GO" id="GO:0008201">
    <property type="term" value="F:heparin binding"/>
    <property type="evidence" value="ECO:0007669"/>
    <property type="project" value="UniProtKB-KW"/>
</dbReference>
<dbReference type="GO" id="GO:0140678">
    <property type="term" value="F:molecular function inhibitor activity"/>
    <property type="evidence" value="ECO:0000353"/>
    <property type="project" value="DisProt"/>
</dbReference>
<dbReference type="GO" id="GO:0030509">
    <property type="term" value="P:BMP signaling pathway"/>
    <property type="evidence" value="ECO:0007669"/>
    <property type="project" value="Ensembl"/>
</dbReference>
<dbReference type="GO" id="GO:0060070">
    <property type="term" value="P:canonical Wnt signaling pathway"/>
    <property type="evidence" value="ECO:0007669"/>
    <property type="project" value="Ensembl"/>
</dbReference>
<dbReference type="GO" id="GO:0071374">
    <property type="term" value="P:cellular response to parathyroid hormone stimulus"/>
    <property type="evidence" value="ECO:0000314"/>
    <property type="project" value="UniProtKB"/>
</dbReference>
<dbReference type="GO" id="GO:0030514">
    <property type="term" value="P:negative regulation of BMP signaling pathway"/>
    <property type="evidence" value="ECO:0000314"/>
    <property type="project" value="MGI"/>
</dbReference>
<dbReference type="GO" id="GO:0090090">
    <property type="term" value="P:negative regulation of canonical Wnt signaling pathway"/>
    <property type="evidence" value="ECO:0000314"/>
    <property type="project" value="BHF-UCL"/>
</dbReference>
<dbReference type="GO" id="GO:0030279">
    <property type="term" value="P:negative regulation of ossification"/>
    <property type="evidence" value="ECO:0000303"/>
    <property type="project" value="UniProtKB"/>
</dbReference>
<dbReference type="GO" id="GO:0031333">
    <property type="term" value="P:negative regulation of protein-containing complex assembly"/>
    <property type="evidence" value="ECO:0000314"/>
    <property type="project" value="BHF-UCL"/>
</dbReference>
<dbReference type="GO" id="GO:0030178">
    <property type="term" value="P:negative regulation of Wnt signaling pathway"/>
    <property type="evidence" value="ECO:0000318"/>
    <property type="project" value="GO_Central"/>
</dbReference>
<dbReference type="GO" id="GO:0001503">
    <property type="term" value="P:ossification"/>
    <property type="evidence" value="ECO:0000318"/>
    <property type="project" value="GO_Central"/>
</dbReference>
<dbReference type="GO" id="GO:0045893">
    <property type="term" value="P:positive regulation of DNA-templated transcription"/>
    <property type="evidence" value="ECO:0000315"/>
    <property type="project" value="UniProtKB"/>
</dbReference>
<dbReference type="GO" id="GO:0009612">
    <property type="term" value="P:response to mechanical stimulus"/>
    <property type="evidence" value="ECO:0000270"/>
    <property type="project" value="UniProtKB"/>
</dbReference>
<dbReference type="DisProt" id="DP00926"/>
<dbReference type="FunFam" id="2.10.90.10:FF:000036">
    <property type="entry name" value="Sclerostin"/>
    <property type="match status" value="1"/>
</dbReference>
<dbReference type="Gene3D" id="2.10.90.10">
    <property type="entry name" value="Cystine-knot cytokines"/>
    <property type="match status" value="1"/>
</dbReference>
<dbReference type="IDEAL" id="IID00584"/>
<dbReference type="InterPro" id="IPR006207">
    <property type="entry name" value="Cys_knot_C"/>
</dbReference>
<dbReference type="InterPro" id="IPR029034">
    <property type="entry name" value="Cystine-knot_cytokine"/>
</dbReference>
<dbReference type="InterPro" id="IPR008835">
    <property type="entry name" value="Sclerostin/SOSTDC1"/>
</dbReference>
<dbReference type="PANTHER" id="PTHR14903:SF4">
    <property type="entry name" value="SCLEROSTIN"/>
    <property type="match status" value="1"/>
</dbReference>
<dbReference type="PANTHER" id="PTHR14903">
    <property type="entry name" value="SCLEROSTIN-RELATED"/>
    <property type="match status" value="1"/>
</dbReference>
<dbReference type="Pfam" id="PF05463">
    <property type="entry name" value="Sclerostin"/>
    <property type="match status" value="1"/>
</dbReference>
<dbReference type="SMART" id="SM00041">
    <property type="entry name" value="CT"/>
    <property type="match status" value="1"/>
</dbReference>
<organism>
    <name type="scientific">Homo sapiens</name>
    <name type="common">Human</name>
    <dbReference type="NCBI Taxonomy" id="9606"/>
    <lineage>
        <taxon>Eukaryota</taxon>
        <taxon>Metazoa</taxon>
        <taxon>Chordata</taxon>
        <taxon>Craniata</taxon>
        <taxon>Vertebrata</taxon>
        <taxon>Euteleostomi</taxon>
        <taxon>Mammalia</taxon>
        <taxon>Eutheria</taxon>
        <taxon>Euarchontoglires</taxon>
        <taxon>Primates</taxon>
        <taxon>Haplorrhini</taxon>
        <taxon>Catarrhini</taxon>
        <taxon>Hominidae</taxon>
        <taxon>Homo</taxon>
    </lineage>
</organism>
<reference key="1">
    <citation type="journal article" date="2001" name="Hum. Mol. Genet.">
        <title>Increased bone density in sclerosteosis is due to the deficiency of a novel secreted protein (SOST).</title>
        <authorList>
            <person name="Balemans W."/>
            <person name="Ebeling M."/>
            <person name="Patel N."/>
            <person name="van Hul E."/>
            <person name="Olson P."/>
            <person name="Dioszegi M."/>
            <person name="Lacza C."/>
            <person name="Wuyts W."/>
            <person name="van den Ende J."/>
            <person name="Willems P."/>
            <person name="Paes-Alves A.F."/>
            <person name="Hill S."/>
            <person name="Bueno M."/>
            <person name="Ramos F.J."/>
            <person name="Tacconi P."/>
            <person name="Dikkers F.G."/>
            <person name="Stratakis C."/>
            <person name="Lindpaintner K."/>
            <person name="Vickery B."/>
            <person name="Foernzler D."/>
            <person name="Van Hul W."/>
        </authorList>
    </citation>
    <scope>NUCLEOTIDE SEQUENCE [MRNA] (ISOFORM 1)</scope>
    <scope>INVOLVEMENT IN SOST1</scope>
</reference>
<reference key="2">
    <citation type="journal article" date="2001" name="Am. J. Hum. Genet.">
        <title>Bone dysplasia sclerosteosis results from loss of the SOST gene product, a novel cystine knot-containing protein.</title>
        <authorList>
            <person name="Brunkow M.E."/>
            <person name="Gardner J.C."/>
            <person name="Van Ness J."/>
            <person name="Paeper B.W."/>
            <person name="Kovacevich B.R."/>
            <person name="Proll S."/>
            <person name="Skonier J.E."/>
            <person name="Zhao L."/>
            <person name="Sabo P.J."/>
            <person name="Fu Y.H."/>
            <person name="Alisch R.S."/>
            <person name="Gillett L."/>
            <person name="Colbert T."/>
            <person name="Tacconi P."/>
            <person name="Galas D."/>
            <person name="Hamersma H."/>
            <person name="Beighton P."/>
            <person name="Mulligan J.T."/>
        </authorList>
    </citation>
    <scope>NUCLEOTIDE SEQUENCE [GENOMIC DNA / MRNA] (ISOFORM 1)</scope>
    <scope>INVOLVEMENT IN SOST1</scope>
</reference>
<reference key="3">
    <citation type="journal article" date="2003" name="Genome Res.">
        <title>The secreted protein discovery initiative (SPDI), a large-scale effort to identify novel human secreted and transmembrane proteins: a bioinformatics assessment.</title>
        <authorList>
            <person name="Clark H.F."/>
            <person name="Gurney A.L."/>
            <person name="Abaya E."/>
            <person name="Baker K."/>
            <person name="Baldwin D.T."/>
            <person name="Brush J."/>
            <person name="Chen J."/>
            <person name="Chow B."/>
            <person name="Chui C."/>
            <person name="Crowley C."/>
            <person name="Currell B."/>
            <person name="Deuel B."/>
            <person name="Dowd P."/>
            <person name="Eaton D."/>
            <person name="Foster J.S."/>
            <person name="Grimaldi C."/>
            <person name="Gu Q."/>
            <person name="Hass P.E."/>
            <person name="Heldens S."/>
            <person name="Huang A."/>
            <person name="Kim H.S."/>
            <person name="Klimowski L."/>
            <person name="Jin Y."/>
            <person name="Johnson S."/>
            <person name="Lee J."/>
            <person name="Lewis L."/>
            <person name="Liao D."/>
            <person name="Mark M.R."/>
            <person name="Robbie E."/>
            <person name="Sanchez C."/>
            <person name="Schoenfeld J."/>
            <person name="Seshagiri S."/>
            <person name="Simmons L."/>
            <person name="Singh J."/>
            <person name="Smith V."/>
            <person name="Stinson J."/>
            <person name="Vagts A."/>
            <person name="Vandlen R.L."/>
            <person name="Watanabe C."/>
            <person name="Wieand D."/>
            <person name="Woods K."/>
            <person name="Xie M.-H."/>
            <person name="Yansura D.G."/>
            <person name="Yi S."/>
            <person name="Yu G."/>
            <person name="Yuan J."/>
            <person name="Zhang M."/>
            <person name="Zhang Z."/>
            <person name="Goddard A.D."/>
            <person name="Wood W.I."/>
            <person name="Godowski P.J."/>
            <person name="Gray A.M."/>
        </authorList>
    </citation>
    <scope>NUCLEOTIDE SEQUENCE [LARGE SCALE MRNA] (ISOFORMS 1 AND 2)</scope>
</reference>
<reference key="4">
    <citation type="journal article" date="2006" name="Nature">
        <title>DNA sequence of human chromosome 17 and analysis of rearrangement in the human lineage.</title>
        <authorList>
            <person name="Zody M.C."/>
            <person name="Garber M."/>
            <person name="Adams D.J."/>
            <person name="Sharpe T."/>
            <person name="Harrow J."/>
            <person name="Lupski J.R."/>
            <person name="Nicholson C."/>
            <person name="Searle S.M."/>
            <person name="Wilming L."/>
            <person name="Young S.K."/>
            <person name="Abouelleil A."/>
            <person name="Allen N.R."/>
            <person name="Bi W."/>
            <person name="Bloom T."/>
            <person name="Borowsky M.L."/>
            <person name="Bugalter B.E."/>
            <person name="Butler J."/>
            <person name="Chang J.L."/>
            <person name="Chen C.-K."/>
            <person name="Cook A."/>
            <person name="Corum B."/>
            <person name="Cuomo C.A."/>
            <person name="de Jong P.J."/>
            <person name="DeCaprio D."/>
            <person name="Dewar K."/>
            <person name="FitzGerald M."/>
            <person name="Gilbert J."/>
            <person name="Gibson R."/>
            <person name="Gnerre S."/>
            <person name="Goldstein S."/>
            <person name="Grafham D.V."/>
            <person name="Grocock R."/>
            <person name="Hafez N."/>
            <person name="Hagopian D.S."/>
            <person name="Hart E."/>
            <person name="Norman C.H."/>
            <person name="Humphray S."/>
            <person name="Jaffe D.B."/>
            <person name="Jones M."/>
            <person name="Kamal M."/>
            <person name="Khodiyar V.K."/>
            <person name="LaButti K."/>
            <person name="Laird G."/>
            <person name="Lehoczky J."/>
            <person name="Liu X."/>
            <person name="Lokyitsang T."/>
            <person name="Loveland J."/>
            <person name="Lui A."/>
            <person name="Macdonald P."/>
            <person name="Major J.E."/>
            <person name="Matthews L."/>
            <person name="Mauceli E."/>
            <person name="McCarroll S.A."/>
            <person name="Mihalev A.H."/>
            <person name="Mudge J."/>
            <person name="Nguyen C."/>
            <person name="Nicol R."/>
            <person name="O'Leary S.B."/>
            <person name="Osoegawa K."/>
            <person name="Schwartz D.C."/>
            <person name="Shaw-Smith C."/>
            <person name="Stankiewicz P."/>
            <person name="Steward C."/>
            <person name="Swarbreck D."/>
            <person name="Venkataraman V."/>
            <person name="Whittaker C.A."/>
            <person name="Yang X."/>
            <person name="Zimmer A.R."/>
            <person name="Bradley A."/>
            <person name="Hubbard T."/>
            <person name="Birren B.W."/>
            <person name="Rogers J."/>
            <person name="Lander E.S."/>
            <person name="Nusbaum C."/>
        </authorList>
    </citation>
    <scope>NUCLEOTIDE SEQUENCE [LARGE SCALE GENOMIC DNA]</scope>
</reference>
<reference key="5">
    <citation type="journal article" date="2004" name="Genome Res.">
        <title>The status, quality, and expansion of the NIH full-length cDNA project: the Mammalian Gene Collection (MGC).</title>
        <authorList>
            <consortium name="The MGC Project Team"/>
        </authorList>
    </citation>
    <scope>NUCLEOTIDE SEQUENCE [LARGE SCALE MRNA] (ISOFORM 1)</scope>
</reference>
<reference key="6">
    <citation type="journal article" date="2004" name="Protein Sci.">
        <title>Signal peptide prediction based on analysis of experimentally verified cleavage sites.</title>
        <authorList>
            <person name="Zhang Z."/>
            <person name="Henzel W.J."/>
        </authorList>
    </citation>
    <scope>PROTEIN SEQUENCE OF 24-38</scope>
</reference>
<reference key="7">
    <citation type="journal article" date="2002" name="J. Med. Genet.">
        <title>Identification of a 52 kb deletion downstream of the SOST gene in patients with van Buchem disease.</title>
        <authorList>
            <person name="Balemans W."/>
            <person name="Patel N."/>
            <person name="Ebeling M."/>
            <person name="Van Hul E."/>
            <person name="Wuyts W."/>
            <person name="Lacza C."/>
            <person name="Dioszegi M."/>
            <person name="Dikkers F.G."/>
            <person name="Hildering P."/>
            <person name="Willems P.J."/>
            <person name="Verheij J.B."/>
            <person name="Lindpaintner K."/>
            <person name="Vickery B."/>
            <person name="Foernzler D."/>
            <person name="Van Hul W."/>
        </authorList>
    </citation>
    <scope>INVOLVEMENT IN VBCH</scope>
</reference>
<reference key="8">
    <citation type="journal article" date="2005" name="J. Biol. Chem.">
        <title>SOST is a ligand for LRP5/LRP6 and a Wnt signaling inhibitor.</title>
        <authorList>
            <person name="Semenov M."/>
            <person name="Tamai K."/>
            <person name="He X."/>
        </authorList>
    </citation>
    <scope>FUNCTION</scope>
    <scope>INTERACTION WITH LRP5 AND LRP6</scope>
</reference>
<reference key="9">
    <citation type="journal article" date="2010" name="Mol. Cell. Proteomics">
        <title>Proteomics characterization of extracellular space components in the human aorta.</title>
        <authorList>
            <person name="Didangelos A."/>
            <person name="Yin X."/>
            <person name="Mandal K."/>
            <person name="Baumert M."/>
            <person name="Jahangiri M."/>
            <person name="Mayr M."/>
        </authorList>
    </citation>
    <scope>TISSUE SPECIFICITY</scope>
    <scope>SUBCELLULAR LOCATION</scope>
</reference>
<reference key="10">
    <citation type="journal article" date="2011" name="Hum. Genet.">
        <title>Identification of signal peptide domain SOST mutations in autosomal dominant craniodiaphyseal dysplasia.</title>
        <authorList>
            <person name="Kim S.J."/>
            <person name="Bieganski T."/>
            <person name="Sohn Y.B."/>
            <person name="Kozlowski K."/>
            <person name="Semenov M."/>
            <person name="Okamoto N."/>
            <person name="Kim C.H."/>
            <person name="Ko A.R."/>
            <person name="Ahn G.H."/>
            <person name="Choi Y.L."/>
            <person name="Park S.W."/>
            <person name="Ki C.S."/>
            <person name="Kim O.H."/>
            <person name="Nishimura G."/>
            <person name="Unger S."/>
            <person name="Superti-Furga A."/>
            <person name="Jin D.K."/>
        </authorList>
    </citation>
    <scope>INVOLVEMENT IN CDD</scope>
    <scope>VARIANTS CDD MET-21 AND LEU-21</scope>
    <scope>CHARACTERIZATION OF VARIANTS CDD MET-21 AND LEU-21</scope>
</reference>
<reference key="11">
    <citation type="journal article" date="2011" name="J. Biol. Chem.">
        <title>Bone overgrowth-associated mutations in the LRP4 gene impair sclerostin facilitator function.</title>
        <authorList>
            <person name="Leupin O."/>
            <person name="Piters E."/>
            <person name="Halleux C."/>
            <person name="Hu S."/>
            <person name="Kramer I."/>
            <person name="Morvan F."/>
            <person name="Bouwmeester T."/>
            <person name="Schirle M."/>
            <person name="Bueno-Lozano M."/>
            <person name="Fuentes F.J."/>
            <person name="Itin P.H."/>
            <person name="Boudin E."/>
            <person name="de Freitas F."/>
            <person name="Jennes K."/>
            <person name="Brannetti B."/>
            <person name="Charara N."/>
            <person name="Ebersbach H."/>
            <person name="Geisse S."/>
            <person name="Lu C.X."/>
            <person name="Bauer A."/>
            <person name="Van Hul W."/>
            <person name="Kneissel M."/>
        </authorList>
    </citation>
    <scope>INTERACTION WITH LRP4; LRP5 AND LRP6</scope>
</reference>
<reference key="12">
    <citation type="journal article" date="2009" name="J. Biol. Chem.">
        <title>Characterization of the structural features and interactions of sclerostin: molecular insight into a key regulator of Wnt-mediated bone formation.</title>
        <authorList>
            <person name="Veverka V."/>
            <person name="Henry A.J."/>
            <person name="Slocombe P.M."/>
            <person name="Ventom A."/>
            <person name="Mulloy B."/>
            <person name="Muskett F.W."/>
            <person name="Muzylak M."/>
            <person name="Greenslade K."/>
            <person name="Moore A."/>
            <person name="Zhang L."/>
            <person name="Gong J."/>
            <person name="Qian X."/>
            <person name="Paszty C."/>
            <person name="Taylor R.J."/>
            <person name="Robinson M.K."/>
            <person name="Carr M.D."/>
        </authorList>
    </citation>
    <scope>STRUCTURE BY NMR OF 25-213</scope>
    <scope>HEPARIN-BINDING</scope>
    <scope>DISULFIDE BONDS</scope>
</reference>
<reference key="13">
    <citation type="journal article" date="2010" name="Hum. Mutat.">
        <title>First missense mutation in the SOST gene causing sclerosteosis by loss of sclerostin function.</title>
        <authorList>
            <person name="Piters E."/>
            <person name="Culha C."/>
            <person name="Moester M."/>
            <person name="Van Bezooijen R."/>
            <person name="Adriaensen D."/>
            <person name="Mueller T."/>
            <person name="Weidauer S."/>
            <person name="Jennes K."/>
            <person name="de Freitas F."/>
            <person name="Loewik C."/>
            <person name="Timmermans J.-P."/>
            <person name="Van Hul W."/>
            <person name="Papapoulos S."/>
        </authorList>
    </citation>
    <scope>VARIANT SOST1 ARG-167</scope>
    <scope>CHARACTERIZATION OF VARIANT SOST1 ARG-167</scope>
</reference>
<sequence>MQLPLALCLVCLLVHTAFRVVEGQGWQAFKNDATEIIPELGEYPEPPPELENNKTMNRAENGGRPPHHPFETKDVSEYSCRELHFTRYVTDGPCRSAKPVTELVCSGQCGPARLLPNAIGRGKWWRPSGPDFRCIPDRYRAQRVQLLCPGGEAPRARKVRLVASCKCKRLTRFHNQSELKDFGTEAARPQKGRKPRPRARSAKANQAELENAY</sequence>